<organism>
    <name type="scientific">Mycobacteroides abscessus (strain ATCC 19977 / DSM 44196 / CCUG 20993 / CIP 104536 / JCM 13569 / NCTC 13031 / TMC 1543 / L948)</name>
    <name type="common">Mycobacterium abscessus</name>
    <dbReference type="NCBI Taxonomy" id="561007"/>
    <lineage>
        <taxon>Bacteria</taxon>
        <taxon>Bacillati</taxon>
        <taxon>Actinomycetota</taxon>
        <taxon>Actinomycetes</taxon>
        <taxon>Mycobacteriales</taxon>
        <taxon>Mycobacteriaceae</taxon>
        <taxon>Mycobacteroides</taxon>
        <taxon>Mycobacteroides abscessus</taxon>
    </lineage>
</organism>
<proteinExistence type="inferred from homology"/>
<keyword id="KW-0028">Amino-acid biosynthesis</keyword>
<keyword id="KW-0057">Aromatic amino acid biosynthesis</keyword>
<keyword id="KW-0274">FAD</keyword>
<keyword id="KW-0285">Flavoprotein</keyword>
<keyword id="KW-0288">FMN</keyword>
<keyword id="KW-0456">Lyase</keyword>
<keyword id="KW-0521">NADP</keyword>
<keyword id="KW-1185">Reference proteome</keyword>
<comment type="function">
    <text evidence="1">Catalyzes the anti-1,4-elimination of the C-3 phosphate and the C-6 proR hydrogen from 5-enolpyruvylshikimate-3-phosphate (EPSP) to yield chorismate, which is the branch point compound that serves as the starting substrate for the three terminal pathways of aromatic amino acid biosynthesis. This reaction introduces a second double bond into the aromatic ring system.</text>
</comment>
<comment type="catalytic activity">
    <reaction evidence="1">
        <text>5-O-(1-carboxyvinyl)-3-phosphoshikimate = chorismate + phosphate</text>
        <dbReference type="Rhea" id="RHEA:21020"/>
        <dbReference type="ChEBI" id="CHEBI:29748"/>
        <dbReference type="ChEBI" id="CHEBI:43474"/>
        <dbReference type="ChEBI" id="CHEBI:57701"/>
        <dbReference type="EC" id="4.2.3.5"/>
    </reaction>
</comment>
<comment type="cofactor">
    <cofactor evidence="1">
        <name>FMNH2</name>
        <dbReference type="ChEBI" id="CHEBI:57618"/>
    </cofactor>
    <text evidence="1">Reduced FMN (FMNH(2)).</text>
</comment>
<comment type="pathway">
    <text evidence="1">Metabolic intermediate biosynthesis; chorismate biosynthesis; chorismate from D-erythrose 4-phosphate and phosphoenolpyruvate: step 7/7.</text>
</comment>
<comment type="subunit">
    <text evidence="1">Homotetramer.</text>
</comment>
<comment type="similarity">
    <text evidence="1">Belongs to the chorismate synthase family.</text>
</comment>
<gene>
    <name evidence="1" type="primary">aroC</name>
    <name type="ordered locus">MAB_2843c</name>
</gene>
<evidence type="ECO:0000255" key="1">
    <source>
        <dbReference type="HAMAP-Rule" id="MF_00300"/>
    </source>
</evidence>
<evidence type="ECO:0000256" key="2">
    <source>
        <dbReference type="SAM" id="MobiDB-lite"/>
    </source>
</evidence>
<protein>
    <recommendedName>
        <fullName evidence="1">Chorismate synthase</fullName>
        <shortName evidence="1">CS</shortName>
        <ecNumber evidence="1">4.2.3.5</ecNumber>
    </recommendedName>
    <alternativeName>
        <fullName evidence="1">5-enolpyruvylshikimate-3-phosphate phospholyase</fullName>
    </alternativeName>
</protein>
<feature type="chain" id="PRO_1000115373" description="Chorismate synthase">
    <location>
        <begin position="1"/>
        <end position="412"/>
    </location>
</feature>
<feature type="region of interest" description="Disordered" evidence="2">
    <location>
        <begin position="391"/>
        <end position="412"/>
    </location>
</feature>
<feature type="compositionally biased region" description="Basic and acidic residues" evidence="2">
    <location>
        <begin position="391"/>
        <end position="404"/>
    </location>
</feature>
<feature type="binding site" evidence="1">
    <location>
        <position position="40"/>
    </location>
    <ligand>
        <name>NADP(+)</name>
        <dbReference type="ChEBI" id="CHEBI:58349"/>
    </ligand>
</feature>
<feature type="binding site" evidence="1">
    <location>
        <position position="46"/>
    </location>
    <ligand>
        <name>NADP(+)</name>
        <dbReference type="ChEBI" id="CHEBI:58349"/>
    </ligand>
</feature>
<feature type="binding site" evidence="1">
    <location>
        <begin position="135"/>
        <end position="137"/>
    </location>
    <ligand>
        <name>FMN</name>
        <dbReference type="ChEBI" id="CHEBI:58210"/>
    </ligand>
</feature>
<feature type="binding site" evidence="1">
    <location>
        <begin position="256"/>
        <end position="257"/>
    </location>
    <ligand>
        <name>FMN</name>
        <dbReference type="ChEBI" id="CHEBI:58210"/>
    </ligand>
</feature>
<feature type="binding site" evidence="1">
    <location>
        <position position="300"/>
    </location>
    <ligand>
        <name>FMN</name>
        <dbReference type="ChEBI" id="CHEBI:58210"/>
    </ligand>
</feature>
<feature type="binding site" evidence="1">
    <location>
        <begin position="315"/>
        <end position="319"/>
    </location>
    <ligand>
        <name>FMN</name>
        <dbReference type="ChEBI" id="CHEBI:58210"/>
    </ligand>
</feature>
<feature type="binding site" evidence="1">
    <location>
        <position position="341"/>
    </location>
    <ligand>
        <name>FMN</name>
        <dbReference type="ChEBI" id="CHEBI:58210"/>
    </ligand>
</feature>
<sequence>MLRWITAGESHGRALVAVLEGMVAGVELTSEDIGRQLARRRLGYGRGARMAFEADQVTMLGGVRHGLTLGGPVAIEVGNTEWPKWETVMSPDPVDPAELQNIARNAPLTRPRPGHADYAGMLKYGFDDARPVLERASARETAARVAVGTLAKAFLKQALGVDVISHVISIGDSDPYEGPVPDAADLAAIDASPVRAFDAQAESSMISEIEAAKKDGDTLGGVVEVVVAGLPVGLGSFISGQDRLDSQLAAAIMGIQAIKGVEIGDGFTTARRRGSAAHDEIYPGPDGILRSTNRAGGLEGGMTNGQPLRVRAAMKPISTVPRALATVDMSTGDEAVAIHQRSDVCAVPAAGVVAEAMVALVVARAALEKFGGDSLSETKTNVAAYLDAVAQREPRQESSDEQPARRAANTAG</sequence>
<reference key="1">
    <citation type="journal article" date="2009" name="PLoS ONE">
        <title>Non mycobacterial virulence genes in the genome of the emerging pathogen Mycobacterium abscessus.</title>
        <authorList>
            <person name="Ripoll F."/>
            <person name="Pasek S."/>
            <person name="Schenowitz C."/>
            <person name="Dossat C."/>
            <person name="Barbe V."/>
            <person name="Rottman M."/>
            <person name="Macheras E."/>
            <person name="Heym B."/>
            <person name="Herrmann J.L."/>
            <person name="Daffe M."/>
            <person name="Brosch R."/>
            <person name="Risler J.L."/>
            <person name="Gaillard J.L."/>
        </authorList>
    </citation>
    <scope>NUCLEOTIDE SEQUENCE [LARGE SCALE GENOMIC DNA]</scope>
    <source>
        <strain>ATCC 19977 / DSM 44196 / CCUG 20993 / CIP 104536 / JCM 13569 / NCTC 13031 / TMC 1543 / L948</strain>
    </source>
</reference>
<accession>B1MCF1</accession>
<name>AROC_MYCA9</name>
<dbReference type="EC" id="4.2.3.5" evidence="1"/>
<dbReference type="EMBL" id="CU458896">
    <property type="protein sequence ID" value="CAM62922.1"/>
    <property type="molecule type" value="Genomic_DNA"/>
</dbReference>
<dbReference type="RefSeq" id="WP_005093578.1">
    <property type="nucleotide sequence ID" value="NZ_MLCG01000003.1"/>
</dbReference>
<dbReference type="SMR" id="B1MCF1"/>
<dbReference type="GeneID" id="93379774"/>
<dbReference type="KEGG" id="mab:MAB_2843c"/>
<dbReference type="UniPathway" id="UPA00053">
    <property type="reaction ID" value="UER00090"/>
</dbReference>
<dbReference type="Proteomes" id="UP000007137">
    <property type="component" value="Chromosome"/>
</dbReference>
<dbReference type="GO" id="GO:0005829">
    <property type="term" value="C:cytosol"/>
    <property type="evidence" value="ECO:0007669"/>
    <property type="project" value="TreeGrafter"/>
</dbReference>
<dbReference type="GO" id="GO:0004107">
    <property type="term" value="F:chorismate synthase activity"/>
    <property type="evidence" value="ECO:0007669"/>
    <property type="project" value="UniProtKB-UniRule"/>
</dbReference>
<dbReference type="GO" id="GO:0010181">
    <property type="term" value="F:FMN binding"/>
    <property type="evidence" value="ECO:0007669"/>
    <property type="project" value="TreeGrafter"/>
</dbReference>
<dbReference type="GO" id="GO:0008652">
    <property type="term" value="P:amino acid biosynthetic process"/>
    <property type="evidence" value="ECO:0007669"/>
    <property type="project" value="UniProtKB-KW"/>
</dbReference>
<dbReference type="GO" id="GO:0009073">
    <property type="term" value="P:aromatic amino acid family biosynthetic process"/>
    <property type="evidence" value="ECO:0007669"/>
    <property type="project" value="UniProtKB-KW"/>
</dbReference>
<dbReference type="GO" id="GO:0009423">
    <property type="term" value="P:chorismate biosynthetic process"/>
    <property type="evidence" value="ECO:0007669"/>
    <property type="project" value="UniProtKB-UniRule"/>
</dbReference>
<dbReference type="CDD" id="cd07304">
    <property type="entry name" value="Chorismate_synthase"/>
    <property type="match status" value="1"/>
</dbReference>
<dbReference type="FunFam" id="3.60.150.10:FF:000002">
    <property type="entry name" value="Chorismate synthase"/>
    <property type="match status" value="1"/>
</dbReference>
<dbReference type="Gene3D" id="3.60.150.10">
    <property type="entry name" value="Chorismate synthase AroC"/>
    <property type="match status" value="1"/>
</dbReference>
<dbReference type="HAMAP" id="MF_00300">
    <property type="entry name" value="Chorismate_synth"/>
    <property type="match status" value="1"/>
</dbReference>
<dbReference type="InterPro" id="IPR000453">
    <property type="entry name" value="Chorismate_synth"/>
</dbReference>
<dbReference type="InterPro" id="IPR035904">
    <property type="entry name" value="Chorismate_synth_AroC_sf"/>
</dbReference>
<dbReference type="InterPro" id="IPR020541">
    <property type="entry name" value="Chorismate_synthase_CS"/>
</dbReference>
<dbReference type="NCBIfam" id="TIGR00033">
    <property type="entry name" value="aroC"/>
    <property type="match status" value="1"/>
</dbReference>
<dbReference type="NCBIfam" id="NF003793">
    <property type="entry name" value="PRK05382.1"/>
    <property type="match status" value="1"/>
</dbReference>
<dbReference type="PANTHER" id="PTHR21085">
    <property type="entry name" value="CHORISMATE SYNTHASE"/>
    <property type="match status" value="1"/>
</dbReference>
<dbReference type="PANTHER" id="PTHR21085:SF0">
    <property type="entry name" value="CHORISMATE SYNTHASE"/>
    <property type="match status" value="1"/>
</dbReference>
<dbReference type="Pfam" id="PF01264">
    <property type="entry name" value="Chorismate_synt"/>
    <property type="match status" value="1"/>
</dbReference>
<dbReference type="PIRSF" id="PIRSF001456">
    <property type="entry name" value="Chorismate_synth"/>
    <property type="match status" value="1"/>
</dbReference>
<dbReference type="SUPFAM" id="SSF103263">
    <property type="entry name" value="Chorismate synthase, AroC"/>
    <property type="match status" value="1"/>
</dbReference>
<dbReference type="PROSITE" id="PS00787">
    <property type="entry name" value="CHORISMATE_SYNTHASE_1"/>
    <property type="match status" value="1"/>
</dbReference>
<dbReference type="PROSITE" id="PS00788">
    <property type="entry name" value="CHORISMATE_SYNTHASE_2"/>
    <property type="match status" value="1"/>
</dbReference>
<dbReference type="PROSITE" id="PS00789">
    <property type="entry name" value="CHORISMATE_SYNTHASE_3"/>
    <property type="match status" value="1"/>
</dbReference>